<gene>
    <name evidence="1" type="primary">ndhD</name>
</gene>
<organism>
    <name type="scientific">Manihot esculenta</name>
    <name type="common">Cassava</name>
    <name type="synonym">Jatropha manihot</name>
    <dbReference type="NCBI Taxonomy" id="3983"/>
    <lineage>
        <taxon>Eukaryota</taxon>
        <taxon>Viridiplantae</taxon>
        <taxon>Streptophyta</taxon>
        <taxon>Embryophyta</taxon>
        <taxon>Tracheophyta</taxon>
        <taxon>Spermatophyta</taxon>
        <taxon>Magnoliopsida</taxon>
        <taxon>eudicotyledons</taxon>
        <taxon>Gunneridae</taxon>
        <taxon>Pentapetalae</taxon>
        <taxon>rosids</taxon>
        <taxon>fabids</taxon>
        <taxon>Malpighiales</taxon>
        <taxon>Euphorbiaceae</taxon>
        <taxon>Crotonoideae</taxon>
        <taxon>Manihoteae</taxon>
        <taxon>Manihot</taxon>
    </lineage>
</organism>
<geneLocation type="chloroplast"/>
<keyword id="KW-0150">Chloroplast</keyword>
<keyword id="KW-0472">Membrane</keyword>
<keyword id="KW-0520">NAD</keyword>
<keyword id="KW-0521">NADP</keyword>
<keyword id="KW-0934">Plastid</keyword>
<keyword id="KW-0618">Plastoquinone</keyword>
<keyword id="KW-0874">Quinone</keyword>
<keyword id="KW-0793">Thylakoid</keyword>
<keyword id="KW-1278">Translocase</keyword>
<keyword id="KW-0812">Transmembrane</keyword>
<keyword id="KW-1133">Transmembrane helix</keyword>
<comment type="catalytic activity">
    <reaction evidence="1">
        <text>a plastoquinone + NADH + (n+1) H(+)(in) = a plastoquinol + NAD(+) + n H(+)(out)</text>
        <dbReference type="Rhea" id="RHEA:42608"/>
        <dbReference type="Rhea" id="RHEA-COMP:9561"/>
        <dbReference type="Rhea" id="RHEA-COMP:9562"/>
        <dbReference type="ChEBI" id="CHEBI:15378"/>
        <dbReference type="ChEBI" id="CHEBI:17757"/>
        <dbReference type="ChEBI" id="CHEBI:57540"/>
        <dbReference type="ChEBI" id="CHEBI:57945"/>
        <dbReference type="ChEBI" id="CHEBI:62192"/>
    </reaction>
</comment>
<comment type="catalytic activity">
    <reaction evidence="1">
        <text>a plastoquinone + NADPH + (n+1) H(+)(in) = a plastoquinol + NADP(+) + n H(+)(out)</text>
        <dbReference type="Rhea" id="RHEA:42612"/>
        <dbReference type="Rhea" id="RHEA-COMP:9561"/>
        <dbReference type="Rhea" id="RHEA-COMP:9562"/>
        <dbReference type="ChEBI" id="CHEBI:15378"/>
        <dbReference type="ChEBI" id="CHEBI:17757"/>
        <dbReference type="ChEBI" id="CHEBI:57783"/>
        <dbReference type="ChEBI" id="CHEBI:58349"/>
        <dbReference type="ChEBI" id="CHEBI:62192"/>
    </reaction>
</comment>
<comment type="subcellular location">
    <subcellularLocation>
        <location evidence="1">Plastid</location>
        <location evidence="1">Chloroplast thylakoid membrane</location>
        <topology evidence="1">Multi-pass membrane protein</topology>
    </subcellularLocation>
</comment>
<comment type="similarity">
    <text evidence="1">Belongs to the complex I subunit 4 family.</text>
</comment>
<name>NU4C_MANES</name>
<evidence type="ECO:0000255" key="1">
    <source>
        <dbReference type="HAMAP-Rule" id="MF_00491"/>
    </source>
</evidence>
<protein>
    <recommendedName>
        <fullName evidence="1">NAD(P)H-quinone oxidoreductase chain 4, chloroplastic</fullName>
        <ecNumber evidence="1">7.1.1.-</ecNumber>
    </recommendedName>
    <alternativeName>
        <fullName evidence="1">NAD(P)H dehydrogenase, chain 4</fullName>
    </alternativeName>
    <alternativeName>
        <fullName evidence="1">NADH-plastoquinone oxidoreductase chain 4</fullName>
    </alternativeName>
</protein>
<dbReference type="EC" id="7.1.1.-" evidence="1"/>
<dbReference type="EMBL" id="EU117376">
    <property type="protein sequence ID" value="ABV66203.1"/>
    <property type="molecule type" value="Genomic_DNA"/>
</dbReference>
<dbReference type="RefSeq" id="YP_001718486.1">
    <property type="nucleotide sequence ID" value="NC_010433.1"/>
</dbReference>
<dbReference type="SMR" id="B1NWJ9"/>
<dbReference type="GeneID" id="6000015"/>
<dbReference type="KEGG" id="mesc:6000015"/>
<dbReference type="OrthoDB" id="564260at2759"/>
<dbReference type="GO" id="GO:0009535">
    <property type="term" value="C:chloroplast thylakoid membrane"/>
    <property type="evidence" value="ECO:0007669"/>
    <property type="project" value="UniProtKB-SubCell"/>
</dbReference>
<dbReference type="GO" id="GO:0008137">
    <property type="term" value="F:NADH dehydrogenase (ubiquinone) activity"/>
    <property type="evidence" value="ECO:0007669"/>
    <property type="project" value="InterPro"/>
</dbReference>
<dbReference type="GO" id="GO:0048038">
    <property type="term" value="F:quinone binding"/>
    <property type="evidence" value="ECO:0007669"/>
    <property type="project" value="UniProtKB-KW"/>
</dbReference>
<dbReference type="GO" id="GO:0042773">
    <property type="term" value="P:ATP synthesis coupled electron transport"/>
    <property type="evidence" value="ECO:0007669"/>
    <property type="project" value="InterPro"/>
</dbReference>
<dbReference type="HAMAP" id="MF_00491">
    <property type="entry name" value="NDH1_NuoM"/>
    <property type="match status" value="1"/>
</dbReference>
<dbReference type="InterPro" id="IPR022997">
    <property type="entry name" value="NADH_Q_OxRdtase_chain4"/>
</dbReference>
<dbReference type="InterPro" id="IPR010227">
    <property type="entry name" value="NADH_Q_OxRdtase_chainM/4"/>
</dbReference>
<dbReference type="InterPro" id="IPR003918">
    <property type="entry name" value="NADH_UbQ_OxRdtase"/>
</dbReference>
<dbReference type="InterPro" id="IPR001750">
    <property type="entry name" value="ND/Mrp_TM"/>
</dbReference>
<dbReference type="NCBIfam" id="TIGR01972">
    <property type="entry name" value="NDH_I_M"/>
    <property type="match status" value="1"/>
</dbReference>
<dbReference type="PANTHER" id="PTHR43507:SF21">
    <property type="entry name" value="NAD(P)H-QUINONE OXIDOREDUCTASE CHAIN 4, CHLOROPLASTIC"/>
    <property type="match status" value="1"/>
</dbReference>
<dbReference type="PANTHER" id="PTHR43507">
    <property type="entry name" value="NADH-UBIQUINONE OXIDOREDUCTASE CHAIN 4"/>
    <property type="match status" value="1"/>
</dbReference>
<dbReference type="Pfam" id="PF00361">
    <property type="entry name" value="Proton_antipo_M"/>
    <property type="match status" value="1"/>
</dbReference>
<dbReference type="PRINTS" id="PR01437">
    <property type="entry name" value="NUOXDRDTASE4"/>
</dbReference>
<proteinExistence type="inferred from homology"/>
<accession>B1NWJ9</accession>
<sequence>MNSFPWLTIFVVLPISGGSLIFLFPHRGNKVIKWYTIFICIFELLLMTYAFSYYFQLDDPLIQLTEDYKWIQFFDFYWRLGIDGFSLGPILLTGFITTLATLAARPITRDSRLFHFLMLAMYSGQIGLFSSQDLLLFFIMWELELIPVYLLLSMWGGKKRLYSATKFILYTAGGSVFLLMGALGIALYGSNEPRFHFETSANQSYPVALEIFFYIGFLIAFAVKSPIIPLHTWLPDTHGEAHYSTCMLLAGILLKMGAYGLVRINMELLPHAHSIFSPWLIIVGVMQIIYAASTSPGQRNLKKRIAYSSVSHMGFIIIGICSISDMGLNGAILQIISHGFIGAALFFLAGTGYDRIRRVYLDEMGGMATSMPKIFTTFSILSLASLALPGMSGFFAELIVFFGIITGQKYLLMSKILITFVMAVGMILTPIYLLSMLRQMFYGYKLFNAPNSYFFDSGPRELFVSISILLPVIGIGFYPDFVFSLSVDRVEAILSNYFYR</sequence>
<reference key="1">
    <citation type="journal article" date="2008" name="Theor. Appl. Genet.">
        <title>The complete nucleotide sequence of the cassava (Manihot esculenta) chloroplast genome and the evolution of atpF in Malpighiales: RNA editing and multiple losses of a group II intron.</title>
        <authorList>
            <person name="Daniell H."/>
            <person name="Wurdack K.J."/>
            <person name="Kanagaraj A."/>
            <person name="Lee S.-B."/>
            <person name="Saski C."/>
            <person name="Jansen R.K."/>
        </authorList>
    </citation>
    <scope>NUCLEOTIDE SEQUENCE [LARGE SCALE GENOMIC DNA]</scope>
    <source>
        <strain>cv. TME3</strain>
    </source>
</reference>
<feature type="chain" id="PRO_0000343292" description="NAD(P)H-quinone oxidoreductase chain 4, chloroplastic">
    <location>
        <begin position="1"/>
        <end position="500"/>
    </location>
</feature>
<feature type="transmembrane region" description="Helical" evidence="1">
    <location>
        <begin position="4"/>
        <end position="24"/>
    </location>
</feature>
<feature type="transmembrane region" description="Helical" evidence="1">
    <location>
        <begin position="31"/>
        <end position="51"/>
    </location>
</feature>
<feature type="transmembrane region" description="Helical" evidence="1">
    <location>
        <begin position="84"/>
        <end position="104"/>
    </location>
</feature>
<feature type="transmembrane region" description="Helical" evidence="1">
    <location>
        <begin position="111"/>
        <end position="129"/>
    </location>
</feature>
<feature type="transmembrane region" description="Helical" evidence="1">
    <location>
        <begin position="134"/>
        <end position="154"/>
    </location>
</feature>
<feature type="transmembrane region" description="Helical" evidence="1">
    <location>
        <begin position="167"/>
        <end position="187"/>
    </location>
</feature>
<feature type="transmembrane region" description="Helical" evidence="1">
    <location>
        <begin position="208"/>
        <end position="228"/>
    </location>
</feature>
<feature type="transmembrane region" description="Helical" evidence="1">
    <location>
        <begin position="242"/>
        <end position="262"/>
    </location>
</feature>
<feature type="transmembrane region" description="Helical" evidence="1">
    <location>
        <begin position="272"/>
        <end position="292"/>
    </location>
</feature>
<feature type="transmembrane region" description="Helical" evidence="1">
    <location>
        <begin position="305"/>
        <end position="325"/>
    </location>
</feature>
<feature type="transmembrane region" description="Helical" evidence="1">
    <location>
        <begin position="330"/>
        <end position="350"/>
    </location>
</feature>
<feature type="transmembrane region" description="Helical" evidence="1">
    <location>
        <begin position="386"/>
        <end position="406"/>
    </location>
</feature>
<feature type="transmembrane region" description="Helical" evidence="1">
    <location>
        <begin position="416"/>
        <end position="436"/>
    </location>
</feature>
<feature type="transmembrane region" description="Helical" evidence="1">
    <location>
        <begin position="463"/>
        <end position="483"/>
    </location>
</feature>